<sequence>MLWFKNLMVYRLSREISLRAEEMEKQLASMAFTPCGSQDMAKMGWVPPMGSHSDALTHVANGQIVICARKEEKILPSPVIKQALEAKIAKLEAEQARKLKKTEKDSLKDEVLHSLLPRAFSRFSQTMMWIDTVNGLIMVDCASAKKAEDTLALLRKSLGSLPVVPLSMENPIELTLTEWVRSGSAAQGFQLLDEAELKSLLEDGGVIRAKKQDLTSEEITNHIEAGKVVTKLALDWQQRIQFVMCDDGSLKRLKFCDELRDQNEDIDREDFAQRFDADFILMTGELAALIQNLIEGLGGEAQR</sequence>
<feature type="chain" id="PRO_1000077638" description="Recombination-associated protein RdgC">
    <location>
        <begin position="1"/>
        <end position="303"/>
    </location>
</feature>
<name>RDGC_ECOLC</name>
<gene>
    <name evidence="1" type="primary">rdgC</name>
    <name type="ordered locus">EcolC_3239</name>
</gene>
<evidence type="ECO:0000255" key="1">
    <source>
        <dbReference type="HAMAP-Rule" id="MF_00194"/>
    </source>
</evidence>
<comment type="function">
    <text evidence="1">May be involved in recombination.</text>
</comment>
<comment type="subcellular location">
    <subcellularLocation>
        <location evidence="1">Cytoplasm</location>
        <location evidence="1">Nucleoid</location>
    </subcellularLocation>
</comment>
<comment type="similarity">
    <text evidence="1">Belongs to the RdgC family.</text>
</comment>
<dbReference type="EMBL" id="CP000946">
    <property type="protein sequence ID" value="ACA78861.1"/>
    <property type="molecule type" value="Genomic_DNA"/>
</dbReference>
<dbReference type="RefSeq" id="WP_001298537.1">
    <property type="nucleotide sequence ID" value="NZ_MTFT01000010.1"/>
</dbReference>
<dbReference type="SMR" id="B1J055"/>
<dbReference type="GeneID" id="75202816"/>
<dbReference type="KEGG" id="ecl:EcolC_3239"/>
<dbReference type="HOGENOM" id="CLU_052038_1_1_6"/>
<dbReference type="GO" id="GO:0043590">
    <property type="term" value="C:bacterial nucleoid"/>
    <property type="evidence" value="ECO:0007669"/>
    <property type="project" value="TreeGrafter"/>
</dbReference>
<dbReference type="GO" id="GO:0005737">
    <property type="term" value="C:cytoplasm"/>
    <property type="evidence" value="ECO:0007669"/>
    <property type="project" value="UniProtKB-UniRule"/>
</dbReference>
<dbReference type="GO" id="GO:0003690">
    <property type="term" value="F:double-stranded DNA binding"/>
    <property type="evidence" value="ECO:0007669"/>
    <property type="project" value="TreeGrafter"/>
</dbReference>
<dbReference type="GO" id="GO:0006310">
    <property type="term" value="P:DNA recombination"/>
    <property type="evidence" value="ECO:0007669"/>
    <property type="project" value="UniProtKB-UniRule"/>
</dbReference>
<dbReference type="GO" id="GO:0000018">
    <property type="term" value="P:regulation of DNA recombination"/>
    <property type="evidence" value="ECO:0007669"/>
    <property type="project" value="TreeGrafter"/>
</dbReference>
<dbReference type="HAMAP" id="MF_00194">
    <property type="entry name" value="RdgC"/>
    <property type="match status" value="1"/>
</dbReference>
<dbReference type="InterPro" id="IPR007476">
    <property type="entry name" value="RdgC"/>
</dbReference>
<dbReference type="NCBIfam" id="NF001460">
    <property type="entry name" value="PRK00321.1-1"/>
    <property type="match status" value="1"/>
</dbReference>
<dbReference type="NCBIfam" id="NF001462">
    <property type="entry name" value="PRK00321.1-3"/>
    <property type="match status" value="1"/>
</dbReference>
<dbReference type="NCBIfam" id="NF001464">
    <property type="entry name" value="PRK00321.1-5"/>
    <property type="match status" value="1"/>
</dbReference>
<dbReference type="PANTHER" id="PTHR38103">
    <property type="entry name" value="RECOMBINATION-ASSOCIATED PROTEIN RDGC"/>
    <property type="match status" value="1"/>
</dbReference>
<dbReference type="PANTHER" id="PTHR38103:SF1">
    <property type="entry name" value="RECOMBINATION-ASSOCIATED PROTEIN RDGC"/>
    <property type="match status" value="1"/>
</dbReference>
<dbReference type="Pfam" id="PF04381">
    <property type="entry name" value="RdgC"/>
    <property type="match status" value="1"/>
</dbReference>
<keyword id="KW-0963">Cytoplasm</keyword>
<keyword id="KW-0233">DNA recombination</keyword>
<organism>
    <name type="scientific">Escherichia coli (strain ATCC 8739 / DSM 1576 / NBRC 3972 / NCIMB 8545 / WDCM 00012 / Crooks)</name>
    <dbReference type="NCBI Taxonomy" id="481805"/>
    <lineage>
        <taxon>Bacteria</taxon>
        <taxon>Pseudomonadati</taxon>
        <taxon>Pseudomonadota</taxon>
        <taxon>Gammaproteobacteria</taxon>
        <taxon>Enterobacterales</taxon>
        <taxon>Enterobacteriaceae</taxon>
        <taxon>Escherichia</taxon>
    </lineage>
</organism>
<proteinExistence type="inferred from homology"/>
<protein>
    <recommendedName>
        <fullName evidence="1">Recombination-associated protein RdgC</fullName>
    </recommendedName>
</protein>
<accession>B1J055</accession>
<reference key="1">
    <citation type="submission" date="2008-02" db="EMBL/GenBank/DDBJ databases">
        <title>Complete sequence of Escherichia coli C str. ATCC 8739.</title>
        <authorList>
            <person name="Copeland A."/>
            <person name="Lucas S."/>
            <person name="Lapidus A."/>
            <person name="Glavina del Rio T."/>
            <person name="Dalin E."/>
            <person name="Tice H."/>
            <person name="Bruce D."/>
            <person name="Goodwin L."/>
            <person name="Pitluck S."/>
            <person name="Kiss H."/>
            <person name="Brettin T."/>
            <person name="Detter J.C."/>
            <person name="Han C."/>
            <person name="Kuske C.R."/>
            <person name="Schmutz J."/>
            <person name="Larimer F."/>
            <person name="Land M."/>
            <person name="Hauser L."/>
            <person name="Kyrpides N."/>
            <person name="Mikhailova N."/>
            <person name="Ingram L."/>
            <person name="Richardson P."/>
        </authorList>
    </citation>
    <scope>NUCLEOTIDE SEQUENCE [LARGE SCALE GENOMIC DNA]</scope>
    <source>
        <strain>ATCC 8739 / DSM 1576 / NBRC 3972 / NCIMB 8545 / WDCM 00012 / Crooks</strain>
    </source>
</reference>